<name>COFC_METVS</name>
<accession>A6URA0</accession>
<gene>
    <name evidence="1" type="primary">cofC</name>
    <name type="ordered locus">Mevan_1122</name>
</gene>
<sequence length="224" mass="25209">MLAALIPVSPLSNVKSRLKEFLSSKERIDLIKNILLDTYEKVKSCVDACYVVSKDDEILEFSKNLGIIPIKEDLNTKGLNEAIEYSLNIIKEDSVLITPADVPLLKEENLESIVKKSVENSVIICPSRGGGTNLLLLNPKNCIKPQFEGFSFLKHIKEAEINNLNIIKCHSFYTSIDINTVEDLGEIFIHGKDTKTYKFLKNLNIEAFPKHSSAGRFNIIRKSQ</sequence>
<comment type="function">
    <text evidence="1">Guanylyltransferase that catalyzes the activation of (2S)-2-phospholactate (2-PL) as (2S)-lactyl-2-diphospho-5'-guanosine, via the condensation of 2-PL with GTP. It is involved in the biosynthesis of coenzyme F420, a hydride carrier cofactor.</text>
</comment>
<comment type="catalytic activity">
    <reaction evidence="1">
        <text>(2S)-2-phospholactate + GTP + H(+) = (2S)-lactyl-2-diphospho-5'-guanosine + diphosphate</text>
        <dbReference type="Rhea" id="RHEA:63424"/>
        <dbReference type="ChEBI" id="CHEBI:15378"/>
        <dbReference type="ChEBI" id="CHEBI:33019"/>
        <dbReference type="ChEBI" id="CHEBI:37565"/>
        <dbReference type="ChEBI" id="CHEBI:59435"/>
        <dbReference type="ChEBI" id="CHEBI:59906"/>
        <dbReference type="EC" id="2.7.7.68"/>
    </reaction>
</comment>
<comment type="pathway">
    <text evidence="1">Cofactor biosynthesis; coenzyme F420 biosynthesis.</text>
</comment>
<comment type="subunit">
    <text evidence="1">Homodimer.</text>
</comment>
<comment type="similarity">
    <text evidence="1">Belongs to the CofC family.</text>
</comment>
<feature type="chain" id="PRO_0000398748" description="2-phospho-L-lactate guanylyltransferase">
    <location>
        <begin position="1"/>
        <end position="224"/>
    </location>
</feature>
<organism>
    <name type="scientific">Methanococcus vannielii (strain ATCC 35089 / DSM 1224 / JCM 13029 / OCM 148 / SB)</name>
    <dbReference type="NCBI Taxonomy" id="406327"/>
    <lineage>
        <taxon>Archaea</taxon>
        <taxon>Methanobacteriati</taxon>
        <taxon>Methanobacteriota</taxon>
        <taxon>Methanomada group</taxon>
        <taxon>Methanococci</taxon>
        <taxon>Methanococcales</taxon>
        <taxon>Methanococcaceae</taxon>
        <taxon>Methanococcus</taxon>
    </lineage>
</organism>
<dbReference type="EC" id="2.7.7.68" evidence="1"/>
<dbReference type="EMBL" id="CP000742">
    <property type="protein sequence ID" value="ABR55022.1"/>
    <property type="molecule type" value="Genomic_DNA"/>
</dbReference>
<dbReference type="RefSeq" id="WP_012065937.1">
    <property type="nucleotide sequence ID" value="NC_009634.1"/>
</dbReference>
<dbReference type="SMR" id="A6URA0"/>
<dbReference type="STRING" id="406327.Mevan_1122"/>
<dbReference type="GeneID" id="5326069"/>
<dbReference type="KEGG" id="mvn:Mevan_1122"/>
<dbReference type="eggNOG" id="arCOG04472">
    <property type="taxonomic scope" value="Archaea"/>
</dbReference>
<dbReference type="HOGENOM" id="CLU_076569_2_0_2"/>
<dbReference type="OrthoDB" id="11179at2157"/>
<dbReference type="UniPathway" id="UPA00071"/>
<dbReference type="Proteomes" id="UP000001107">
    <property type="component" value="Chromosome"/>
</dbReference>
<dbReference type="GO" id="GO:0005525">
    <property type="term" value="F:GTP binding"/>
    <property type="evidence" value="ECO:0007669"/>
    <property type="project" value="UniProtKB-KW"/>
</dbReference>
<dbReference type="GO" id="GO:0043814">
    <property type="term" value="F:phospholactate guanylyltransferase activity"/>
    <property type="evidence" value="ECO:0007669"/>
    <property type="project" value="UniProtKB-EC"/>
</dbReference>
<dbReference type="GO" id="GO:0052645">
    <property type="term" value="P:F420-0 metabolic process"/>
    <property type="evidence" value="ECO:0007669"/>
    <property type="project" value="UniProtKB-UniRule"/>
</dbReference>
<dbReference type="Gene3D" id="3.90.550.10">
    <property type="entry name" value="Spore Coat Polysaccharide Biosynthesis Protein SpsA, Chain A"/>
    <property type="match status" value="1"/>
</dbReference>
<dbReference type="HAMAP" id="MF_02114">
    <property type="entry name" value="CofC"/>
    <property type="match status" value="1"/>
</dbReference>
<dbReference type="InterPro" id="IPR002835">
    <property type="entry name" value="CofC"/>
</dbReference>
<dbReference type="InterPro" id="IPR029044">
    <property type="entry name" value="Nucleotide-diphossugar_trans"/>
</dbReference>
<dbReference type="NCBIfam" id="TIGR03552">
    <property type="entry name" value="F420_cofC"/>
    <property type="match status" value="1"/>
</dbReference>
<dbReference type="PANTHER" id="PTHR40392">
    <property type="entry name" value="2-PHOSPHO-L-LACTATE GUANYLYLTRANSFERASE"/>
    <property type="match status" value="1"/>
</dbReference>
<dbReference type="PANTHER" id="PTHR40392:SF1">
    <property type="entry name" value="2-PHOSPHO-L-LACTATE GUANYLYLTRANSFERASE"/>
    <property type="match status" value="1"/>
</dbReference>
<dbReference type="Pfam" id="PF01983">
    <property type="entry name" value="CofC"/>
    <property type="match status" value="1"/>
</dbReference>
<dbReference type="SUPFAM" id="SSF53448">
    <property type="entry name" value="Nucleotide-diphospho-sugar transferases"/>
    <property type="match status" value="1"/>
</dbReference>
<evidence type="ECO:0000255" key="1">
    <source>
        <dbReference type="HAMAP-Rule" id="MF_02114"/>
    </source>
</evidence>
<keyword id="KW-0342">GTP-binding</keyword>
<keyword id="KW-0547">Nucleotide-binding</keyword>
<keyword id="KW-0548">Nucleotidyltransferase</keyword>
<keyword id="KW-0808">Transferase</keyword>
<reference key="1">
    <citation type="submission" date="2007-06" db="EMBL/GenBank/DDBJ databases">
        <title>Complete sequence of Methanococcus vannielii SB.</title>
        <authorList>
            <consortium name="US DOE Joint Genome Institute"/>
            <person name="Copeland A."/>
            <person name="Lucas S."/>
            <person name="Lapidus A."/>
            <person name="Barry K."/>
            <person name="Glavina del Rio T."/>
            <person name="Dalin E."/>
            <person name="Tice H."/>
            <person name="Pitluck S."/>
            <person name="Chain P."/>
            <person name="Malfatti S."/>
            <person name="Shin M."/>
            <person name="Vergez L."/>
            <person name="Schmutz J."/>
            <person name="Larimer F."/>
            <person name="Land M."/>
            <person name="Hauser L."/>
            <person name="Kyrpides N."/>
            <person name="Anderson I."/>
            <person name="Sieprawska-Lupa M."/>
            <person name="Whitman W.B."/>
            <person name="Richardson P."/>
        </authorList>
    </citation>
    <scope>NUCLEOTIDE SEQUENCE [LARGE SCALE GENOMIC DNA]</scope>
    <source>
        <strain>ATCC 35089 / DSM 1224 / JCM 13029 / OCM 148 / SB</strain>
    </source>
</reference>
<proteinExistence type="inferred from homology"/>
<protein>
    <recommendedName>
        <fullName evidence="1">2-phospho-L-lactate guanylyltransferase</fullName>
        <shortName evidence="1">LP guanylyltransferase</shortName>
        <ecNumber evidence="1">2.7.7.68</ecNumber>
    </recommendedName>
</protein>